<feature type="chain" id="PRO_0000162844" description="Thiazole synthase">
    <location>
        <begin position="1"/>
        <end position="265"/>
    </location>
</feature>
<feature type="active site" description="Schiff-base intermediate with DXP" evidence="1">
    <location>
        <position position="106"/>
    </location>
</feature>
<feature type="binding site" evidence="1">
    <location>
        <position position="167"/>
    </location>
    <ligand>
        <name>1-deoxy-D-xylulose 5-phosphate</name>
        <dbReference type="ChEBI" id="CHEBI:57792"/>
    </ligand>
</feature>
<feature type="binding site" evidence="1">
    <location>
        <begin position="193"/>
        <end position="194"/>
    </location>
    <ligand>
        <name>1-deoxy-D-xylulose 5-phosphate</name>
        <dbReference type="ChEBI" id="CHEBI:57792"/>
    </ligand>
</feature>
<feature type="binding site" evidence="1">
    <location>
        <begin position="215"/>
        <end position="216"/>
    </location>
    <ligand>
        <name>1-deoxy-D-xylulose 5-phosphate</name>
        <dbReference type="ChEBI" id="CHEBI:57792"/>
    </ligand>
</feature>
<proteinExistence type="inferred from homology"/>
<reference key="1">
    <citation type="journal article" date="2003" name="Nature">
        <title>Genome divergence in two Prochlorococcus ecotypes reflects oceanic niche differentiation.</title>
        <authorList>
            <person name="Rocap G."/>
            <person name="Larimer F.W."/>
            <person name="Lamerdin J.E."/>
            <person name="Malfatti S."/>
            <person name="Chain P."/>
            <person name="Ahlgren N.A."/>
            <person name="Arellano A."/>
            <person name="Coleman M."/>
            <person name="Hauser L."/>
            <person name="Hess W.R."/>
            <person name="Johnson Z.I."/>
            <person name="Land M.L."/>
            <person name="Lindell D."/>
            <person name="Post A.F."/>
            <person name="Regala W."/>
            <person name="Shah M."/>
            <person name="Shaw S.L."/>
            <person name="Steglich C."/>
            <person name="Sullivan M.B."/>
            <person name="Ting C.S."/>
            <person name="Tolonen A."/>
            <person name="Webb E.A."/>
            <person name="Zinser E.R."/>
            <person name="Chisholm S.W."/>
        </authorList>
    </citation>
    <scope>NUCLEOTIDE SEQUENCE [LARGE SCALE GENOMIC DNA]</scope>
    <source>
        <strain>CCMP1986 / NIES-2087 / MED4</strain>
    </source>
</reference>
<dbReference type="EC" id="2.8.1.10" evidence="1"/>
<dbReference type="EMBL" id="BX548174">
    <property type="protein sequence ID" value="CAE20123.1"/>
    <property type="molecule type" value="Genomic_DNA"/>
</dbReference>
<dbReference type="RefSeq" id="WP_011133291.1">
    <property type="nucleotide sequence ID" value="NC_005072.1"/>
</dbReference>
<dbReference type="SMR" id="Q7UZJ9"/>
<dbReference type="STRING" id="59919.PMM1664"/>
<dbReference type="KEGG" id="pmm:PMM1664"/>
<dbReference type="eggNOG" id="COG2022">
    <property type="taxonomic scope" value="Bacteria"/>
</dbReference>
<dbReference type="HOGENOM" id="CLU_062233_1_0_3"/>
<dbReference type="OrthoDB" id="9805935at2"/>
<dbReference type="UniPathway" id="UPA00060"/>
<dbReference type="Proteomes" id="UP000001026">
    <property type="component" value="Chromosome"/>
</dbReference>
<dbReference type="GO" id="GO:0005737">
    <property type="term" value="C:cytoplasm"/>
    <property type="evidence" value="ECO:0007669"/>
    <property type="project" value="UniProtKB-SubCell"/>
</dbReference>
<dbReference type="GO" id="GO:1990107">
    <property type="term" value="F:thiazole synthase activity"/>
    <property type="evidence" value="ECO:0007669"/>
    <property type="project" value="UniProtKB-EC"/>
</dbReference>
<dbReference type="GO" id="GO:0009229">
    <property type="term" value="P:thiamine diphosphate biosynthetic process"/>
    <property type="evidence" value="ECO:0007669"/>
    <property type="project" value="UniProtKB-UniRule"/>
</dbReference>
<dbReference type="CDD" id="cd04728">
    <property type="entry name" value="ThiG"/>
    <property type="match status" value="1"/>
</dbReference>
<dbReference type="Gene3D" id="3.20.20.70">
    <property type="entry name" value="Aldolase class I"/>
    <property type="match status" value="1"/>
</dbReference>
<dbReference type="HAMAP" id="MF_00443">
    <property type="entry name" value="ThiG"/>
    <property type="match status" value="1"/>
</dbReference>
<dbReference type="InterPro" id="IPR013785">
    <property type="entry name" value="Aldolase_TIM"/>
</dbReference>
<dbReference type="InterPro" id="IPR033983">
    <property type="entry name" value="Thiazole_synthase_ThiG"/>
</dbReference>
<dbReference type="InterPro" id="IPR008867">
    <property type="entry name" value="ThiG"/>
</dbReference>
<dbReference type="PANTHER" id="PTHR34266">
    <property type="entry name" value="THIAZOLE SYNTHASE"/>
    <property type="match status" value="1"/>
</dbReference>
<dbReference type="PANTHER" id="PTHR34266:SF2">
    <property type="entry name" value="THIAZOLE SYNTHASE"/>
    <property type="match status" value="1"/>
</dbReference>
<dbReference type="Pfam" id="PF05690">
    <property type="entry name" value="ThiG"/>
    <property type="match status" value="1"/>
</dbReference>
<dbReference type="SUPFAM" id="SSF110399">
    <property type="entry name" value="ThiG-like"/>
    <property type="match status" value="1"/>
</dbReference>
<name>THIG_PROMP</name>
<sequence>MKEDSCLQIGGKSFSSRLMVGTGKYTSSEVMLESLANTESEIVTVAVRRIQNNQNGENLLEKIDWKKFWMLPNTAGCTNSDEAIRIAILGRELAKLSGQEENNFVKLEVIPDKKYLLPDPIETLKAAEILINKDFIVLPYINADPILAKKLEEIGCSTVMPLGSPIGSGQGLLNLSNISIIIENSNIPVIIDAGIGVPSEASQAMELGADGVLINSAIALAKNPLKMAKAMNYGVKAGREAFLAGRIEKQKLANASSPEINISIK</sequence>
<accession>Q7UZJ9</accession>
<organism>
    <name type="scientific">Prochlorococcus marinus subsp. pastoris (strain CCMP1986 / NIES-2087 / MED4)</name>
    <dbReference type="NCBI Taxonomy" id="59919"/>
    <lineage>
        <taxon>Bacteria</taxon>
        <taxon>Bacillati</taxon>
        <taxon>Cyanobacteriota</taxon>
        <taxon>Cyanophyceae</taxon>
        <taxon>Synechococcales</taxon>
        <taxon>Prochlorococcaceae</taxon>
        <taxon>Prochlorococcus</taxon>
    </lineage>
</organism>
<gene>
    <name evidence="1" type="primary">thiG</name>
    <name type="ordered locus">PMM1664</name>
</gene>
<keyword id="KW-0963">Cytoplasm</keyword>
<keyword id="KW-0704">Schiff base</keyword>
<keyword id="KW-0784">Thiamine biosynthesis</keyword>
<keyword id="KW-0808">Transferase</keyword>
<evidence type="ECO:0000255" key="1">
    <source>
        <dbReference type="HAMAP-Rule" id="MF_00443"/>
    </source>
</evidence>
<protein>
    <recommendedName>
        <fullName evidence="1">Thiazole synthase</fullName>
        <ecNumber evidence="1">2.8.1.10</ecNumber>
    </recommendedName>
</protein>
<comment type="function">
    <text evidence="1">Catalyzes the rearrangement of 1-deoxy-D-xylulose 5-phosphate (DXP) to produce the thiazole phosphate moiety of thiamine. Sulfur is provided by the thiocarboxylate moiety of the carrier protein ThiS. In vitro, sulfur can be provided by H(2)S.</text>
</comment>
<comment type="catalytic activity">
    <reaction evidence="1">
        <text>[ThiS sulfur-carrier protein]-C-terminal-Gly-aminoethanethioate + 2-iminoacetate + 1-deoxy-D-xylulose 5-phosphate = [ThiS sulfur-carrier protein]-C-terminal Gly-Gly + 2-[(2R,5Z)-2-carboxy-4-methylthiazol-5(2H)-ylidene]ethyl phosphate + 2 H2O + H(+)</text>
        <dbReference type="Rhea" id="RHEA:26297"/>
        <dbReference type="Rhea" id="RHEA-COMP:12909"/>
        <dbReference type="Rhea" id="RHEA-COMP:19908"/>
        <dbReference type="ChEBI" id="CHEBI:15377"/>
        <dbReference type="ChEBI" id="CHEBI:15378"/>
        <dbReference type="ChEBI" id="CHEBI:57792"/>
        <dbReference type="ChEBI" id="CHEBI:62899"/>
        <dbReference type="ChEBI" id="CHEBI:77846"/>
        <dbReference type="ChEBI" id="CHEBI:90778"/>
        <dbReference type="ChEBI" id="CHEBI:232372"/>
        <dbReference type="EC" id="2.8.1.10"/>
    </reaction>
</comment>
<comment type="pathway">
    <text evidence="1">Cofactor biosynthesis; thiamine diphosphate biosynthesis.</text>
</comment>
<comment type="subunit">
    <text evidence="1">Homotetramer. Forms heterodimers with either ThiH or ThiS.</text>
</comment>
<comment type="subcellular location">
    <subcellularLocation>
        <location evidence="1">Cytoplasm</location>
    </subcellularLocation>
</comment>
<comment type="similarity">
    <text evidence="1">Belongs to the ThiG family.</text>
</comment>